<feature type="chain" id="PRO_0000200144" description="Homeobox protein Hox-B7">
    <location>
        <begin position="1"/>
        <end position="219"/>
    </location>
</feature>
<feature type="DNA-binding region" description="Homeobox" evidence="2">
    <location>
        <begin position="137"/>
        <end position="196"/>
    </location>
</feature>
<feature type="region of interest" description="Disordered" evidence="3">
    <location>
        <begin position="193"/>
        <end position="219"/>
    </location>
</feature>
<feature type="short sequence motif" description="Antp-type hexapeptide">
    <location>
        <begin position="126"/>
        <end position="131"/>
    </location>
</feature>
<feature type="compositionally biased region" description="Acidic residues" evidence="3">
    <location>
        <begin position="210"/>
        <end position="219"/>
    </location>
</feature>
<feature type="sequence conflict" description="In Ref. 2; AAA41342." evidence="4" ref="2">
    <original>AL</original>
    <variation>GV</variation>
    <location>
        <begin position="173"/>
        <end position="174"/>
    </location>
</feature>
<protein>
    <recommendedName>
        <fullName>Homeobox protein Hox-B7</fullName>
    </recommendedName>
    <alternativeName>
        <fullName>Homeobox protein R1B</fullName>
    </alternativeName>
</protein>
<sequence length="219" mass="24243">MSSLYYANALFSKYPAASSVFAPGAFPEQTSCAFASNPQRPGYGAGPGAPFSASVQGLYSGGGGMAGQSAAGVYEAGYGLEPSSFNMHCAPFEQNLSGVCPGDPAKAAGAKEQRDSDLAAESNFRIYPWMRSSGTERKRGRQTYTRYQTLELEKEFHYNRYLTRRRRIEIAHALCLTERQIKIWFQNRRMKWKKENKTSGPGTTGQDKAEADEEEEEEE</sequence>
<dbReference type="EMBL" id="BC079340">
    <property type="protein sequence ID" value="AAH79340.1"/>
    <property type="molecule type" value="mRNA"/>
</dbReference>
<dbReference type="EMBL" id="M37566">
    <property type="protein sequence ID" value="AAA41342.2"/>
    <property type="status" value="ALT_SEQ"/>
    <property type="molecule type" value="Genomic_DNA"/>
</dbReference>
<dbReference type="PIR" id="T10775">
    <property type="entry name" value="T10775"/>
</dbReference>
<dbReference type="RefSeq" id="NP_001017480.1">
    <property type="nucleotide sequence ID" value="NM_001017480.1"/>
</dbReference>
<dbReference type="SMR" id="P18864"/>
<dbReference type="FunCoup" id="P18864">
    <property type="interactions" value="107"/>
</dbReference>
<dbReference type="STRING" id="10116.ENSRNOP00000033609"/>
<dbReference type="PhosphoSitePlus" id="P18864"/>
<dbReference type="PaxDb" id="10116-ENSRNOP00000033609"/>
<dbReference type="Ensembl" id="ENSRNOT00000031035.5">
    <property type="protein sequence ID" value="ENSRNOP00000033609.3"/>
    <property type="gene ID" value="ENSRNOG00000007611.6"/>
</dbReference>
<dbReference type="GeneID" id="497985"/>
<dbReference type="KEGG" id="rno:497985"/>
<dbReference type="UCSC" id="RGD:1559918">
    <property type="organism name" value="rat"/>
</dbReference>
<dbReference type="AGR" id="RGD:1559918"/>
<dbReference type="CTD" id="3217"/>
<dbReference type="RGD" id="1559918">
    <property type="gene designation" value="Hoxb7"/>
</dbReference>
<dbReference type="eggNOG" id="KOG0489">
    <property type="taxonomic scope" value="Eukaryota"/>
</dbReference>
<dbReference type="GeneTree" id="ENSGT00940000161230"/>
<dbReference type="HOGENOM" id="CLU_061398_1_1_1"/>
<dbReference type="InParanoid" id="P18864"/>
<dbReference type="OMA" id="QNCNKTD"/>
<dbReference type="OrthoDB" id="38125at9989"/>
<dbReference type="PhylomeDB" id="P18864"/>
<dbReference type="TreeFam" id="TF316310"/>
<dbReference type="PRO" id="PR:P18864"/>
<dbReference type="Proteomes" id="UP000002494">
    <property type="component" value="Chromosome 10"/>
</dbReference>
<dbReference type="Bgee" id="ENSRNOG00000007611">
    <property type="expression patterns" value="Expressed in kidney and 14 other cell types or tissues"/>
</dbReference>
<dbReference type="GO" id="GO:0005829">
    <property type="term" value="C:cytosol"/>
    <property type="evidence" value="ECO:0007669"/>
    <property type="project" value="Ensembl"/>
</dbReference>
<dbReference type="GO" id="GO:0016604">
    <property type="term" value="C:nuclear body"/>
    <property type="evidence" value="ECO:0007669"/>
    <property type="project" value="Ensembl"/>
</dbReference>
<dbReference type="GO" id="GO:0005634">
    <property type="term" value="C:nucleus"/>
    <property type="evidence" value="ECO:0000318"/>
    <property type="project" value="GO_Central"/>
</dbReference>
<dbReference type="GO" id="GO:0003677">
    <property type="term" value="F:DNA binding"/>
    <property type="evidence" value="ECO:0000266"/>
    <property type="project" value="RGD"/>
</dbReference>
<dbReference type="GO" id="GO:0001228">
    <property type="term" value="F:DNA-binding transcription activator activity, RNA polymerase II-specific"/>
    <property type="evidence" value="ECO:0000266"/>
    <property type="project" value="RGD"/>
</dbReference>
<dbReference type="GO" id="GO:0000981">
    <property type="term" value="F:DNA-binding transcription factor activity, RNA polymerase II-specific"/>
    <property type="evidence" value="ECO:0000318"/>
    <property type="project" value="GO_Central"/>
</dbReference>
<dbReference type="GO" id="GO:0000978">
    <property type="term" value="F:RNA polymerase II cis-regulatory region sequence-specific DNA binding"/>
    <property type="evidence" value="ECO:0000266"/>
    <property type="project" value="RGD"/>
</dbReference>
<dbReference type="GO" id="GO:1990837">
    <property type="term" value="F:sequence-specific double-stranded DNA binding"/>
    <property type="evidence" value="ECO:0000266"/>
    <property type="project" value="RGD"/>
</dbReference>
<dbReference type="GO" id="GO:0009952">
    <property type="term" value="P:anterior/posterior pattern specification"/>
    <property type="evidence" value="ECO:0000266"/>
    <property type="project" value="RGD"/>
</dbReference>
<dbReference type="GO" id="GO:0048568">
    <property type="term" value="P:embryonic organ development"/>
    <property type="evidence" value="ECO:0000266"/>
    <property type="project" value="RGD"/>
</dbReference>
<dbReference type="GO" id="GO:0048704">
    <property type="term" value="P:embryonic skeletal system morphogenesis"/>
    <property type="evidence" value="ECO:0000266"/>
    <property type="project" value="RGD"/>
</dbReference>
<dbReference type="GO" id="GO:0030099">
    <property type="term" value="P:myeloid cell differentiation"/>
    <property type="evidence" value="ECO:0000266"/>
    <property type="project" value="RGD"/>
</dbReference>
<dbReference type="GO" id="GO:0090190">
    <property type="term" value="P:positive regulation of branching involved in ureteric bud morphogenesis"/>
    <property type="evidence" value="ECO:0000266"/>
    <property type="project" value="RGD"/>
</dbReference>
<dbReference type="GO" id="GO:0045944">
    <property type="term" value="P:positive regulation of transcription by RNA polymerase II"/>
    <property type="evidence" value="ECO:0000266"/>
    <property type="project" value="RGD"/>
</dbReference>
<dbReference type="GO" id="GO:0006357">
    <property type="term" value="P:regulation of transcription by RNA polymerase II"/>
    <property type="evidence" value="ECO:0000318"/>
    <property type="project" value="GO_Central"/>
</dbReference>
<dbReference type="CDD" id="cd00086">
    <property type="entry name" value="homeodomain"/>
    <property type="match status" value="1"/>
</dbReference>
<dbReference type="FunFam" id="1.10.10.60:FF:000017">
    <property type="entry name" value="Homeobox protein antennapedia"/>
    <property type="match status" value="1"/>
</dbReference>
<dbReference type="Gene3D" id="1.10.10.60">
    <property type="entry name" value="Homeodomain-like"/>
    <property type="match status" value="1"/>
</dbReference>
<dbReference type="InterPro" id="IPR050296">
    <property type="entry name" value="Antp_homeobox"/>
</dbReference>
<dbReference type="InterPro" id="IPR001356">
    <property type="entry name" value="HD"/>
</dbReference>
<dbReference type="InterPro" id="IPR020479">
    <property type="entry name" value="HD_metazoa"/>
</dbReference>
<dbReference type="InterPro" id="IPR017995">
    <property type="entry name" value="Homeobox_antennapedia"/>
</dbReference>
<dbReference type="InterPro" id="IPR001827">
    <property type="entry name" value="Homeobox_Antennapedia_CS"/>
</dbReference>
<dbReference type="InterPro" id="IPR017970">
    <property type="entry name" value="Homeobox_CS"/>
</dbReference>
<dbReference type="InterPro" id="IPR009057">
    <property type="entry name" value="Homeodomain-like_sf"/>
</dbReference>
<dbReference type="PANTHER" id="PTHR45659">
    <property type="entry name" value="HOMEOBOX PROTEIN HOX"/>
    <property type="match status" value="1"/>
</dbReference>
<dbReference type="PANTHER" id="PTHR45659:SF11">
    <property type="entry name" value="HOMEOBOX PROTEIN HOX-B7"/>
    <property type="match status" value="1"/>
</dbReference>
<dbReference type="Pfam" id="PF00046">
    <property type="entry name" value="Homeodomain"/>
    <property type="match status" value="1"/>
</dbReference>
<dbReference type="PRINTS" id="PR00025">
    <property type="entry name" value="ANTENNAPEDIA"/>
</dbReference>
<dbReference type="PRINTS" id="PR00024">
    <property type="entry name" value="HOMEOBOX"/>
</dbReference>
<dbReference type="SMART" id="SM00389">
    <property type="entry name" value="HOX"/>
    <property type="match status" value="1"/>
</dbReference>
<dbReference type="SUPFAM" id="SSF46689">
    <property type="entry name" value="Homeodomain-like"/>
    <property type="match status" value="1"/>
</dbReference>
<dbReference type="PROSITE" id="PS00032">
    <property type="entry name" value="ANTENNAPEDIA"/>
    <property type="match status" value="1"/>
</dbReference>
<dbReference type="PROSITE" id="PS00027">
    <property type="entry name" value="HOMEOBOX_1"/>
    <property type="match status" value="1"/>
</dbReference>
<dbReference type="PROSITE" id="PS50071">
    <property type="entry name" value="HOMEOBOX_2"/>
    <property type="match status" value="1"/>
</dbReference>
<gene>
    <name type="primary">Hoxb7</name>
    <name type="synonym">Hoxb-7</name>
    <name type="synonym">R1b</name>
</gene>
<keyword id="KW-0217">Developmental protein</keyword>
<keyword id="KW-0238">DNA-binding</keyword>
<keyword id="KW-0371">Homeobox</keyword>
<keyword id="KW-0539">Nucleus</keyword>
<keyword id="KW-1185">Reference proteome</keyword>
<keyword id="KW-0804">Transcription</keyword>
<keyword id="KW-0805">Transcription regulation</keyword>
<organism>
    <name type="scientific">Rattus norvegicus</name>
    <name type="common">Rat</name>
    <dbReference type="NCBI Taxonomy" id="10116"/>
    <lineage>
        <taxon>Eukaryota</taxon>
        <taxon>Metazoa</taxon>
        <taxon>Chordata</taxon>
        <taxon>Craniata</taxon>
        <taxon>Vertebrata</taxon>
        <taxon>Euteleostomi</taxon>
        <taxon>Mammalia</taxon>
        <taxon>Eutheria</taxon>
        <taxon>Euarchontoglires</taxon>
        <taxon>Glires</taxon>
        <taxon>Rodentia</taxon>
        <taxon>Myomorpha</taxon>
        <taxon>Muroidea</taxon>
        <taxon>Muridae</taxon>
        <taxon>Murinae</taxon>
        <taxon>Rattus</taxon>
    </lineage>
</organism>
<accession>P18864</accession>
<accession>Q68FU9</accession>
<evidence type="ECO:0000250" key="1">
    <source>
        <dbReference type="UniProtKB" id="P09629"/>
    </source>
</evidence>
<evidence type="ECO:0000255" key="2">
    <source>
        <dbReference type="PROSITE-ProRule" id="PRU00108"/>
    </source>
</evidence>
<evidence type="ECO:0000256" key="3">
    <source>
        <dbReference type="SAM" id="MobiDB-lite"/>
    </source>
</evidence>
<evidence type="ECO:0000305" key="4"/>
<reference key="1">
    <citation type="journal article" date="2004" name="Genome Res.">
        <title>The status, quality, and expansion of the NIH full-length cDNA project: the Mammalian Gene Collection (MGC).</title>
        <authorList>
            <consortium name="The MGC Project Team"/>
        </authorList>
    </citation>
    <scope>NUCLEOTIDE SEQUENCE [LARGE SCALE MRNA]</scope>
    <source>
        <tissue>Kidney</tissue>
    </source>
</reference>
<reference key="2">
    <citation type="journal article" date="1988" name="Development">
        <title>The expression of rat homeobox-containing genes is developmentally regulated and tissue specific.</title>
        <authorList>
            <person name="Falzon M."/>
            <person name="Chung S.Y."/>
        </authorList>
    </citation>
    <scope>NUCLEOTIDE SEQUENCE [GENOMIC DNA] OF 134-199</scope>
    <source>
        <strain>Sprague-Dawley</strain>
    </source>
</reference>
<name>HXB7_RAT</name>
<proteinExistence type="evidence at transcript level"/>
<comment type="function">
    <text>Sequence-specific transcription factor which is part of a developmental regulatory system that provides cells with specific positional identities on the anterior-posterior axis.</text>
</comment>
<comment type="subunit">
    <text evidence="1">Forms a DNA-binding heterodimer with transcription factor PBX1.</text>
</comment>
<comment type="subcellular location">
    <subcellularLocation>
        <location>Nucleus</location>
    </subcellularLocation>
</comment>
<comment type="tissue specificity">
    <text>Predominantly spinal cord and kidney.</text>
</comment>
<comment type="similarity">
    <text evidence="4">Belongs to the Antp homeobox family.</text>
</comment>
<comment type="sequence caution" evidence="4">
    <conflict type="frameshift">
        <sequence resource="EMBL-CDS" id="AAA41342"/>
    </conflict>
</comment>
<comment type="sequence caution" evidence="4">
    <conflict type="miscellaneous discrepancy">
        <sequence resource="EMBL-CDS" id="AAA41342"/>
    </conflict>
    <text>Intron retention.</text>
</comment>